<accession>Q7VD38</accession>
<feature type="chain" id="PRO_1000048411" description="Light-independent protochlorophyllide reductase subunit B">
    <location>
        <begin position="1"/>
        <end position="530"/>
    </location>
</feature>
<feature type="region of interest" description="Disordered" evidence="2">
    <location>
        <begin position="448"/>
        <end position="483"/>
    </location>
</feature>
<feature type="compositionally biased region" description="Polar residues" evidence="2">
    <location>
        <begin position="458"/>
        <end position="473"/>
    </location>
</feature>
<feature type="active site" description="Proton donor" evidence="1">
    <location>
        <position position="290"/>
    </location>
</feature>
<feature type="binding site" evidence="1">
    <location>
        <position position="36"/>
    </location>
    <ligand>
        <name>[4Fe-4S] cluster</name>
        <dbReference type="ChEBI" id="CHEBI:49883"/>
        <note>ligand shared with heterodimeric partner</note>
    </ligand>
</feature>
<feature type="binding site" evidence="1">
    <location>
        <begin position="425"/>
        <end position="426"/>
    </location>
    <ligand>
        <name>substrate</name>
    </ligand>
</feature>
<feature type="strand" evidence="3">
    <location>
        <begin position="2"/>
        <end position="6"/>
    </location>
</feature>
<feature type="helix" evidence="3">
    <location>
        <begin position="12"/>
        <end position="22"/>
    </location>
</feature>
<feature type="strand" evidence="3">
    <location>
        <begin position="23"/>
        <end position="31"/>
    </location>
</feature>
<feature type="helix" evidence="3">
    <location>
        <begin position="36"/>
        <end position="39"/>
    </location>
</feature>
<feature type="helix" evidence="3">
    <location>
        <begin position="40"/>
        <end position="44"/>
    </location>
</feature>
<feature type="strand" evidence="3">
    <location>
        <begin position="54"/>
        <end position="57"/>
    </location>
</feature>
<feature type="helix" evidence="3">
    <location>
        <begin position="62"/>
        <end position="66"/>
    </location>
</feature>
<feature type="helix" evidence="3">
    <location>
        <begin position="69"/>
        <end position="84"/>
    </location>
</feature>
<feature type="strand" evidence="3">
    <location>
        <begin position="87"/>
        <end position="93"/>
    </location>
</feature>
<feature type="helix" evidence="3">
    <location>
        <begin position="95"/>
        <end position="100"/>
    </location>
</feature>
<feature type="helix" evidence="3">
    <location>
        <begin position="104"/>
        <end position="108"/>
    </location>
</feature>
<feature type="turn" evidence="3">
    <location>
        <begin position="109"/>
        <end position="112"/>
    </location>
</feature>
<feature type="strand" evidence="3">
    <location>
        <begin position="117"/>
        <end position="119"/>
    </location>
</feature>
<feature type="turn" evidence="3">
    <location>
        <begin position="124"/>
        <end position="126"/>
    </location>
</feature>
<feature type="helix" evidence="3">
    <location>
        <begin position="129"/>
        <end position="145"/>
    </location>
</feature>
<feature type="helix" evidence="3">
    <location>
        <begin position="159"/>
        <end position="163"/>
    </location>
</feature>
<feature type="strand" evidence="3">
    <location>
        <begin position="168"/>
        <end position="172"/>
    </location>
</feature>
<feature type="strand" evidence="3">
    <location>
        <begin position="178"/>
        <end position="180"/>
    </location>
</feature>
<feature type="helix" evidence="3">
    <location>
        <begin position="181"/>
        <end position="194"/>
    </location>
</feature>
<feature type="strand" evidence="3">
    <location>
        <begin position="198"/>
        <end position="204"/>
    </location>
</feature>
<feature type="helix" evidence="3">
    <location>
        <begin position="209"/>
        <end position="212"/>
    </location>
</feature>
<feature type="helix" evidence="3">
    <location>
        <begin position="213"/>
        <end position="217"/>
    </location>
</feature>
<feature type="strand" evidence="3">
    <location>
        <begin position="218"/>
        <end position="224"/>
    </location>
</feature>
<feature type="helix" evidence="3">
    <location>
        <begin position="226"/>
        <end position="240"/>
    </location>
</feature>
<feature type="helix" evidence="3">
    <location>
        <begin position="252"/>
        <end position="266"/>
    </location>
</feature>
<feature type="helix" evidence="3">
    <location>
        <begin position="277"/>
        <end position="279"/>
    </location>
</feature>
<feature type="helix" evidence="3">
    <location>
        <begin position="282"/>
        <end position="287"/>
    </location>
</feature>
<feature type="helix" evidence="3">
    <location>
        <begin position="289"/>
        <end position="294"/>
    </location>
</feature>
<feature type="strand" evidence="3">
    <location>
        <begin position="298"/>
        <end position="301"/>
    </location>
</feature>
<feature type="helix" evidence="3">
    <location>
        <begin position="305"/>
        <end position="317"/>
    </location>
</feature>
<feature type="strand" evidence="3">
    <location>
        <begin position="322"/>
        <end position="329"/>
    </location>
</feature>
<feature type="helix" evidence="3">
    <location>
        <begin position="331"/>
        <end position="333"/>
    </location>
</feature>
<feature type="helix" evidence="3">
    <location>
        <begin position="334"/>
        <end position="343"/>
    </location>
</feature>
<feature type="helix" evidence="3">
    <location>
        <begin position="354"/>
        <end position="364"/>
    </location>
</feature>
<feature type="strand" evidence="3">
    <location>
        <begin position="367"/>
        <end position="371"/>
    </location>
</feature>
<feature type="helix" evidence="3">
    <location>
        <begin position="373"/>
        <end position="382"/>
    </location>
</feature>
<feature type="strand" evidence="3">
    <location>
        <begin position="386"/>
        <end position="388"/>
    </location>
</feature>
<feature type="strand" evidence="3">
    <location>
        <begin position="390"/>
        <end position="392"/>
    </location>
</feature>
<feature type="helix" evidence="3">
    <location>
        <begin position="395"/>
        <end position="397"/>
    </location>
</feature>
<feature type="helix" evidence="3">
    <location>
        <begin position="407"/>
        <end position="419"/>
    </location>
</feature>
<feature type="helix" evidence="3">
    <location>
        <begin position="425"/>
        <end position="433"/>
    </location>
</feature>
<feature type="strand" evidence="3">
    <location>
        <begin position="438"/>
        <end position="440"/>
    </location>
</feature>
<feature type="helix" evidence="3">
    <location>
        <begin position="446"/>
        <end position="448"/>
    </location>
</feature>
<feature type="helix" evidence="3">
    <location>
        <begin position="483"/>
        <end position="490"/>
    </location>
</feature>
<feature type="helix" evidence="3">
    <location>
        <begin position="494"/>
        <end position="496"/>
    </location>
</feature>
<feature type="helix" evidence="3">
    <location>
        <begin position="497"/>
        <end position="510"/>
    </location>
</feature>
<feature type="helix" evidence="3">
    <location>
        <begin position="518"/>
        <end position="527"/>
    </location>
</feature>
<keyword id="KW-0002">3D-structure</keyword>
<keyword id="KW-0004">4Fe-4S</keyword>
<keyword id="KW-0067">ATP-binding</keyword>
<keyword id="KW-0149">Chlorophyll biosynthesis</keyword>
<keyword id="KW-0408">Iron</keyword>
<keyword id="KW-0411">Iron-sulfur</keyword>
<keyword id="KW-0479">Metal-binding</keyword>
<keyword id="KW-0547">Nucleotide-binding</keyword>
<keyword id="KW-0560">Oxidoreductase</keyword>
<keyword id="KW-0602">Photosynthesis</keyword>
<keyword id="KW-1185">Reference proteome</keyword>
<proteinExistence type="evidence at protein level"/>
<name>CHLB_PROMA</name>
<evidence type="ECO:0000255" key="1">
    <source>
        <dbReference type="HAMAP-Rule" id="MF_00353"/>
    </source>
</evidence>
<evidence type="ECO:0000256" key="2">
    <source>
        <dbReference type="SAM" id="MobiDB-lite"/>
    </source>
</evidence>
<evidence type="ECO:0007829" key="3">
    <source>
        <dbReference type="PDB" id="2YNM"/>
    </source>
</evidence>
<gene>
    <name evidence="1" type="primary">chlB</name>
    <name type="ordered locus">Pro_0545</name>
</gene>
<organism>
    <name type="scientific">Prochlorococcus marinus (strain SARG / CCMP1375 / SS120)</name>
    <dbReference type="NCBI Taxonomy" id="167539"/>
    <lineage>
        <taxon>Bacteria</taxon>
        <taxon>Bacillati</taxon>
        <taxon>Cyanobacteriota</taxon>
        <taxon>Cyanophyceae</taxon>
        <taxon>Synechococcales</taxon>
        <taxon>Prochlorococcaceae</taxon>
        <taxon>Prochlorococcus</taxon>
    </lineage>
</organism>
<comment type="function">
    <text evidence="1">Component of the dark-operative protochlorophyllide reductase (DPOR) that uses Mg-ATP and reduced ferredoxin to reduce ring D of protochlorophyllide (Pchlide) to form chlorophyllide a (Chlide). This reaction is light-independent. The NB-protein (ChlN-ChlB) is the catalytic component of the complex.</text>
</comment>
<comment type="catalytic activity">
    <reaction evidence="1">
        <text>chlorophyllide a + oxidized 2[4Fe-4S]-[ferredoxin] + 2 ADP + 2 phosphate = protochlorophyllide a + reduced 2[4Fe-4S]-[ferredoxin] + 2 ATP + 2 H2O</text>
        <dbReference type="Rhea" id="RHEA:28202"/>
        <dbReference type="Rhea" id="RHEA-COMP:10002"/>
        <dbReference type="Rhea" id="RHEA-COMP:10004"/>
        <dbReference type="ChEBI" id="CHEBI:15377"/>
        <dbReference type="ChEBI" id="CHEBI:30616"/>
        <dbReference type="ChEBI" id="CHEBI:33722"/>
        <dbReference type="ChEBI" id="CHEBI:33723"/>
        <dbReference type="ChEBI" id="CHEBI:43474"/>
        <dbReference type="ChEBI" id="CHEBI:83348"/>
        <dbReference type="ChEBI" id="CHEBI:83350"/>
        <dbReference type="ChEBI" id="CHEBI:456216"/>
        <dbReference type="EC" id="1.3.7.7"/>
    </reaction>
</comment>
<comment type="cofactor">
    <cofactor evidence="1">
        <name>[4Fe-4S] cluster</name>
        <dbReference type="ChEBI" id="CHEBI:49883"/>
    </cofactor>
    <text evidence="1">Binds 1 [4Fe-4S] cluster per heterodimer. The cluster is bound at the heterodimer interface by residues from both subunits.</text>
</comment>
<comment type="pathway">
    <text evidence="1">Porphyrin-containing compound metabolism; chlorophyll biosynthesis (light-independent).</text>
</comment>
<comment type="subunit">
    <text evidence="1">Protochlorophyllide reductase is composed of three subunits; ChlL, ChlN and ChlB. Forms a heterotetramer of two ChlB and two ChlN subunits.</text>
</comment>
<comment type="similarity">
    <text evidence="1">Belongs to the ChlB/BchB/BchZ family.</text>
</comment>
<dbReference type="EC" id="1.3.7.7" evidence="1"/>
<dbReference type="EMBL" id="AE017126">
    <property type="protein sequence ID" value="AAP99590.1"/>
    <property type="molecule type" value="Genomic_DNA"/>
</dbReference>
<dbReference type="RefSeq" id="NP_874938.1">
    <property type="nucleotide sequence ID" value="NC_005042.1"/>
</dbReference>
<dbReference type="RefSeq" id="WP_011124699.1">
    <property type="nucleotide sequence ID" value="NC_005042.1"/>
</dbReference>
<dbReference type="PDB" id="2YNM">
    <property type="method" value="X-ray"/>
    <property type="resolution" value="2.10 A"/>
    <property type="chains" value="D=1-530"/>
</dbReference>
<dbReference type="PDBsum" id="2YNM"/>
<dbReference type="SMR" id="Q7VD38"/>
<dbReference type="IntAct" id="Q7VD38">
    <property type="interactions" value="2"/>
</dbReference>
<dbReference type="STRING" id="167539.Pro_0545"/>
<dbReference type="EnsemblBacteria" id="AAP99590">
    <property type="protein sequence ID" value="AAP99590"/>
    <property type="gene ID" value="Pro_0545"/>
</dbReference>
<dbReference type="KEGG" id="pma:Pro_0545"/>
<dbReference type="PATRIC" id="fig|167539.5.peg.560"/>
<dbReference type="eggNOG" id="COG2710">
    <property type="taxonomic scope" value="Bacteria"/>
</dbReference>
<dbReference type="HOGENOM" id="CLU_025470_0_0_3"/>
<dbReference type="OrthoDB" id="5717231at2"/>
<dbReference type="UniPathway" id="UPA00670"/>
<dbReference type="EvolutionaryTrace" id="Q7VD38"/>
<dbReference type="Proteomes" id="UP000001420">
    <property type="component" value="Chromosome"/>
</dbReference>
<dbReference type="GO" id="GO:0051539">
    <property type="term" value="F:4 iron, 4 sulfur cluster binding"/>
    <property type="evidence" value="ECO:0007669"/>
    <property type="project" value="UniProtKB-UniRule"/>
</dbReference>
<dbReference type="GO" id="GO:0005524">
    <property type="term" value="F:ATP binding"/>
    <property type="evidence" value="ECO:0007669"/>
    <property type="project" value="UniProtKB-UniRule"/>
</dbReference>
<dbReference type="GO" id="GO:0046872">
    <property type="term" value="F:metal ion binding"/>
    <property type="evidence" value="ECO:0007669"/>
    <property type="project" value="UniProtKB-KW"/>
</dbReference>
<dbReference type="GO" id="GO:0016730">
    <property type="term" value="F:oxidoreductase activity, acting on iron-sulfur proteins as donors"/>
    <property type="evidence" value="ECO:0007669"/>
    <property type="project" value="InterPro"/>
</dbReference>
<dbReference type="GO" id="GO:0016636">
    <property type="term" value="F:oxidoreductase activity, acting on the CH-CH group of donors, iron-sulfur protein as acceptor"/>
    <property type="evidence" value="ECO:0007669"/>
    <property type="project" value="UniProtKB-UniRule"/>
</dbReference>
<dbReference type="GO" id="GO:0036068">
    <property type="term" value="P:light-independent chlorophyll biosynthetic process"/>
    <property type="evidence" value="ECO:0007669"/>
    <property type="project" value="UniProtKB-UniRule"/>
</dbReference>
<dbReference type="GO" id="GO:0019685">
    <property type="term" value="P:photosynthesis, dark reaction"/>
    <property type="evidence" value="ECO:0007669"/>
    <property type="project" value="InterPro"/>
</dbReference>
<dbReference type="CDD" id="cd01981">
    <property type="entry name" value="Pchlide_reductase_B"/>
    <property type="match status" value="1"/>
</dbReference>
<dbReference type="Gene3D" id="1.20.89.20">
    <property type="match status" value="1"/>
</dbReference>
<dbReference type="Gene3D" id="3.40.50.1980">
    <property type="entry name" value="Nitrogenase molybdenum iron protein domain"/>
    <property type="match status" value="3"/>
</dbReference>
<dbReference type="Gene3D" id="1.10.8.550">
    <property type="entry name" value="Proto-chlorophyllide reductase 57 kD subunit B"/>
    <property type="match status" value="1"/>
</dbReference>
<dbReference type="HAMAP" id="MF_00353">
    <property type="entry name" value="ChlB_BchB"/>
    <property type="match status" value="1"/>
</dbReference>
<dbReference type="InterPro" id="IPR050152">
    <property type="entry name" value="ChlB/BchB/BchZ"/>
</dbReference>
<dbReference type="InterPro" id="IPR013580">
    <property type="entry name" value="LI-POR_suB-like_C"/>
</dbReference>
<dbReference type="InterPro" id="IPR000510">
    <property type="entry name" value="Nase/OxRdtase_comp1"/>
</dbReference>
<dbReference type="InterPro" id="IPR042298">
    <property type="entry name" value="P-CP_red_C"/>
</dbReference>
<dbReference type="InterPro" id="IPR005969">
    <property type="entry name" value="Protochl_reductB"/>
</dbReference>
<dbReference type="InterPro" id="IPR016209">
    <property type="entry name" value="Protochlorophyllide_Rdtase"/>
</dbReference>
<dbReference type="NCBIfam" id="TIGR01278">
    <property type="entry name" value="DPOR_BchB"/>
    <property type="match status" value="1"/>
</dbReference>
<dbReference type="NCBIfam" id="NF002790">
    <property type="entry name" value="PRK02910.1-4"/>
    <property type="match status" value="1"/>
</dbReference>
<dbReference type="PANTHER" id="PTHR33712">
    <property type="entry name" value="LIGHT-INDEPENDENT PROTOCHLOROPHYLLIDE REDUCTASE SUBUNIT B"/>
    <property type="match status" value="1"/>
</dbReference>
<dbReference type="PANTHER" id="PTHR33712:SF7">
    <property type="entry name" value="LIGHT-INDEPENDENT PROTOCHLOROPHYLLIDE REDUCTASE SUBUNIT B"/>
    <property type="match status" value="1"/>
</dbReference>
<dbReference type="Pfam" id="PF00148">
    <property type="entry name" value="Oxidored_nitro"/>
    <property type="match status" value="1"/>
</dbReference>
<dbReference type="Pfam" id="PF08369">
    <property type="entry name" value="PCP_red"/>
    <property type="match status" value="1"/>
</dbReference>
<dbReference type="PIRSF" id="PIRSF000163">
    <property type="entry name" value="PCP_ChlB"/>
    <property type="match status" value="1"/>
</dbReference>
<dbReference type="SUPFAM" id="SSF53807">
    <property type="entry name" value="Helical backbone' metal receptor"/>
    <property type="match status" value="1"/>
</dbReference>
<sequence>MELTLWTYEGPPHIGAMRIATSMKGLHYVLHAPQGDTYADLLFTMIERRGSRPPVTYTTFQARDLGGDTAELVKGHIFEAVERFKPEALLVGESCTAELIQDQPGSLAKGMGLNIPIVSLELPAYSKKENWGASETFYQLIRGLLKEISEDSSNNAKQSWQEEGRRPRVNLLGPSLLGFRCRDDVLEIQKILGENGIDINVIAPLGASPSDLMRLPKADANVCLYPEIAESTCLWLERNFKTPFTKVVPIGVKATQDFLEELYELLGMEVSNSISNSDQSKLPWYSKSVDSNYLTGKRVFIFGDGTHVLAAARIANEELGFEVVGIGTYSREMARKVRAAATELGLEALITNDYLEVEESIKECAPELVLGTQMERHSAKRLGIPCAVISTPMHVQDVPARYSPQMGWEGANVIFDDWVHPLMMGLEEHLIGMFRHDFEFTDGHQSHLGHLGGHASETKTSSKGINQSPNNHSPAGESIHWTSEGESELAKIPFFVRGKVRRNTEKYARQAGCREIDGETLLDAKAHFGA</sequence>
<reference key="1">
    <citation type="journal article" date="2003" name="Proc. Natl. Acad. Sci. U.S.A.">
        <title>Genome sequence of the cyanobacterium Prochlorococcus marinus SS120, a nearly minimal oxyphototrophic genome.</title>
        <authorList>
            <person name="Dufresne A."/>
            <person name="Salanoubat M."/>
            <person name="Partensky F."/>
            <person name="Artiguenave F."/>
            <person name="Axmann I.M."/>
            <person name="Barbe V."/>
            <person name="Duprat S."/>
            <person name="Galperin M.Y."/>
            <person name="Koonin E.V."/>
            <person name="Le Gall F."/>
            <person name="Makarova K.S."/>
            <person name="Ostrowski M."/>
            <person name="Oztas S."/>
            <person name="Robert C."/>
            <person name="Rogozin I.B."/>
            <person name="Scanlan D.J."/>
            <person name="Tandeau de Marsac N."/>
            <person name="Weissenbach J."/>
            <person name="Wincker P."/>
            <person name="Wolf Y.I."/>
            <person name="Hess W.R."/>
        </authorList>
    </citation>
    <scope>NUCLEOTIDE SEQUENCE [LARGE SCALE GENOMIC DNA]</scope>
    <source>
        <strain>SARG / CCMP1375 / SS120</strain>
    </source>
</reference>
<protein>
    <recommendedName>
        <fullName evidence="1">Light-independent protochlorophyllide reductase subunit B</fullName>
        <shortName evidence="1">DPOR subunit B</shortName>
        <shortName evidence="1">LI-POR subunit B</shortName>
        <ecNumber evidence="1">1.3.7.7</ecNumber>
    </recommendedName>
</protein>